<organism>
    <name type="scientific">Saccharomyces cerevisiae (strain AWRI1631)</name>
    <name type="common">Baker's yeast</name>
    <dbReference type="NCBI Taxonomy" id="545124"/>
    <lineage>
        <taxon>Eukaryota</taxon>
        <taxon>Fungi</taxon>
        <taxon>Dikarya</taxon>
        <taxon>Ascomycota</taxon>
        <taxon>Saccharomycotina</taxon>
        <taxon>Saccharomycetes</taxon>
        <taxon>Saccharomycetales</taxon>
        <taxon>Saccharomycetaceae</taxon>
        <taxon>Saccharomyces</taxon>
    </lineage>
</organism>
<sequence>MNQEDNTGGGGIFGLFKWTKDALFGTDISPSMKYKDQEERRDRSRYAQDDTNFSMKFGNDSNRRSTNLSRSNSWSGLDSTLHRKYELLPEYNENGFNSIVNGDHHSKERIRSLRSPAPIVPREPLRNEPTDTFGHRLHTKRRTINELSNSQIPFIPPQEDDPLLSKLFNKDGVNEVRRSPYKLSVKDIPGKFPSPLTKRDEIDNYYVRDEDACHKNREYKKAYFDLFAQMDLNSRDLEDLCEDVREQREQFHRNEQTYKQAYEEMRAELVNELKKSKTLFENYYSLGQKYKSLKKVLDQTISHEAELATSRERLYQEEDLKNFEIQTLKQRLSDLELKYTNLQIEKDMQRDNYESEIHDLLLQLSLRNNERKDTSAGSNIFSTGQYDRTPFHNGNNSYDSNSHSWDTDYLKNIDGFIER</sequence>
<name>BBP1_YEAS6</name>
<accession>B5VST2</accession>
<proteinExistence type="inferred from homology"/>
<feature type="chain" id="PRO_0000409177" description="Spindle pole component BBP1">
    <location>
        <begin position="1"/>
        <end position="419"/>
    </location>
</feature>
<feature type="region of interest" description="Disordered" evidence="4">
    <location>
        <begin position="34"/>
        <end position="76"/>
    </location>
</feature>
<feature type="coiled-coil region" evidence="3">
    <location>
        <begin position="229"/>
        <end position="355"/>
    </location>
</feature>
<feature type="compositionally biased region" description="Basic and acidic residues" evidence="4">
    <location>
        <begin position="34"/>
        <end position="48"/>
    </location>
</feature>
<feature type="compositionally biased region" description="Low complexity" evidence="4">
    <location>
        <begin position="64"/>
        <end position="75"/>
    </location>
</feature>
<feature type="modified residue" description="Phosphoserine" evidence="2">
    <location>
        <position position="29"/>
    </location>
</feature>
<feature type="modified residue" description="Phosphoserine" evidence="2">
    <location>
        <position position="73"/>
    </location>
</feature>
<feature type="modified residue" description="Phosphoserine" evidence="2">
    <location>
        <position position="115"/>
    </location>
</feature>
<evidence type="ECO:0000250" key="1"/>
<evidence type="ECO:0000250" key="2">
    <source>
        <dbReference type="UniProtKB" id="Q12365"/>
    </source>
</evidence>
<evidence type="ECO:0000255" key="3"/>
<evidence type="ECO:0000256" key="4">
    <source>
        <dbReference type="SAM" id="MobiDB-lite"/>
    </source>
</evidence>
<evidence type="ECO:0000305" key="5"/>
<keyword id="KW-0175">Coiled coil</keyword>
<keyword id="KW-0963">Cytoplasm</keyword>
<keyword id="KW-0206">Cytoskeleton</keyword>
<keyword id="KW-0597">Phosphoprotein</keyword>
<protein>
    <recommendedName>
        <fullName>Spindle pole component BBP1</fullName>
    </recommendedName>
    <alternativeName>
        <fullName>BFR1-binding protein 1</fullName>
    </alternativeName>
</protein>
<reference key="1">
    <citation type="journal article" date="2008" name="FEMS Yeast Res.">
        <title>Comparative genome analysis of a Saccharomyces cerevisiae wine strain.</title>
        <authorList>
            <person name="Borneman A.R."/>
            <person name="Forgan A.H."/>
            <person name="Pretorius I.S."/>
            <person name="Chambers P.J."/>
        </authorList>
    </citation>
    <scope>NUCLEOTIDE SEQUENCE [LARGE SCALE GENOMIC DNA]</scope>
    <source>
        <strain>AWRI1631</strain>
    </source>
</reference>
<dbReference type="EMBL" id="ABSV01002278">
    <property type="protein sequence ID" value="EDZ69008.1"/>
    <property type="molecule type" value="Genomic_DNA"/>
</dbReference>
<dbReference type="SMR" id="B5VST2"/>
<dbReference type="Proteomes" id="UP000008988">
    <property type="component" value="Unassembled WGS sequence"/>
</dbReference>
<dbReference type="GO" id="GO:0005737">
    <property type="term" value="C:cytoplasm"/>
    <property type="evidence" value="ECO:0007669"/>
    <property type="project" value="UniProtKB-KW"/>
</dbReference>
<dbReference type="GO" id="GO:0005816">
    <property type="term" value="C:spindle pole body"/>
    <property type="evidence" value="ECO:0007669"/>
    <property type="project" value="UniProtKB-SubCell"/>
</dbReference>
<dbReference type="InterPro" id="IPR029330">
    <property type="entry name" value="Bbp1_C"/>
</dbReference>
<dbReference type="InterPro" id="IPR029328">
    <property type="entry name" value="Bbp1_N"/>
</dbReference>
<dbReference type="Pfam" id="PF15272">
    <property type="entry name" value="BBP1_C"/>
    <property type="match status" value="1"/>
</dbReference>
<dbReference type="Pfam" id="PF15271">
    <property type="entry name" value="BBP1_N"/>
    <property type="match status" value="1"/>
</dbReference>
<comment type="function">
    <text evidence="1">Component of the spindle pole body (SPB) required for insertion of the nascent SPB into the nuclear envelope and for the proper execution of spindle pole body (SPB) duplication. Connects the central plaque of the SPB with the half-bridge. Required for proper localization of CDC5 at the SPB and for proper M-phase progression (By similarity).</text>
</comment>
<comment type="subunit">
    <text evidence="1">Homodimer. Interacts with KAR1, MPS2 and SPC29.</text>
</comment>
<comment type="subcellular location">
    <subcellularLocation>
        <location evidence="1">Cytoplasm</location>
        <location evidence="1">Cytoskeleton</location>
        <location evidence="1">Microtubule organizing center</location>
        <location evidence="1">Spindle pole body</location>
    </subcellularLocation>
    <text evidence="1">Associates with the periphary of the central plaque.</text>
</comment>
<comment type="similarity">
    <text evidence="5">Belongs to the BBP1 family.</text>
</comment>
<gene>
    <name type="primary">BBP1</name>
    <name type="ORF">AWRI1631_160200</name>
</gene>